<dbReference type="EMBL" id="AE016820">
    <property type="protein sequence ID" value="AAS54141.1"/>
    <property type="molecule type" value="Genomic_DNA"/>
</dbReference>
<dbReference type="RefSeq" id="NP_986317.1">
    <property type="nucleotide sequence ID" value="NM_211379.1"/>
</dbReference>
<dbReference type="FunCoup" id="Q751P0">
    <property type="interactions" value="262"/>
</dbReference>
<dbReference type="STRING" id="284811.Q751P0"/>
<dbReference type="EnsemblFungi" id="AAS54141">
    <property type="protein sequence ID" value="AAS54141"/>
    <property type="gene ID" value="AGOS_AGL350C"/>
</dbReference>
<dbReference type="GeneID" id="4622610"/>
<dbReference type="KEGG" id="ago:AGOS_AGL350C"/>
<dbReference type="eggNOG" id="KOG2809">
    <property type="taxonomic scope" value="Eukaryota"/>
</dbReference>
<dbReference type="HOGENOM" id="CLU_052839_0_0_1"/>
<dbReference type="InParanoid" id="Q751P0"/>
<dbReference type="OMA" id="PCWDQSS"/>
<dbReference type="OrthoDB" id="29523at2759"/>
<dbReference type="Proteomes" id="UP000000591">
    <property type="component" value="Chromosome VII"/>
</dbReference>
<dbReference type="GO" id="GO:0005730">
    <property type="term" value="C:nucleolus"/>
    <property type="evidence" value="ECO:0007669"/>
    <property type="project" value="UniProtKB-SubCell"/>
</dbReference>
<dbReference type="GO" id="GO:0003676">
    <property type="term" value="F:nucleic acid binding"/>
    <property type="evidence" value="ECO:0007669"/>
    <property type="project" value="InterPro"/>
</dbReference>
<dbReference type="GO" id="GO:0006364">
    <property type="term" value="P:rRNA processing"/>
    <property type="evidence" value="ECO:0007669"/>
    <property type="project" value="UniProtKB-KW"/>
</dbReference>
<dbReference type="InterPro" id="IPR000467">
    <property type="entry name" value="G_patch_dom"/>
</dbReference>
<dbReference type="InterPro" id="IPR050656">
    <property type="entry name" value="PINX1"/>
</dbReference>
<dbReference type="PANTHER" id="PTHR23149">
    <property type="entry name" value="G PATCH DOMAIN CONTAINING PROTEIN"/>
    <property type="match status" value="1"/>
</dbReference>
<dbReference type="PANTHER" id="PTHR23149:SF31">
    <property type="entry name" value="PROTEIN PXR1"/>
    <property type="match status" value="1"/>
</dbReference>
<dbReference type="Pfam" id="PF01585">
    <property type="entry name" value="G-patch"/>
    <property type="match status" value="1"/>
</dbReference>
<dbReference type="SMART" id="SM00443">
    <property type="entry name" value="G_patch"/>
    <property type="match status" value="1"/>
</dbReference>
<dbReference type="PROSITE" id="PS50174">
    <property type="entry name" value="G_PATCH"/>
    <property type="match status" value="1"/>
</dbReference>
<keyword id="KW-0539">Nucleus</keyword>
<keyword id="KW-1185">Reference proteome</keyword>
<keyword id="KW-0690">Ribosome biogenesis</keyword>
<keyword id="KW-0698">rRNA processing</keyword>
<proteinExistence type="inferred from homology"/>
<gene>
    <name type="primary">PXR1</name>
    <name type="ordered locus">AGL350C</name>
</gene>
<accession>Q751P0</accession>
<organism>
    <name type="scientific">Eremothecium gossypii (strain ATCC 10895 / CBS 109.51 / FGSC 9923 / NRRL Y-1056)</name>
    <name type="common">Yeast</name>
    <name type="synonym">Ashbya gossypii</name>
    <dbReference type="NCBI Taxonomy" id="284811"/>
    <lineage>
        <taxon>Eukaryota</taxon>
        <taxon>Fungi</taxon>
        <taxon>Dikarya</taxon>
        <taxon>Ascomycota</taxon>
        <taxon>Saccharomycotina</taxon>
        <taxon>Saccharomycetes</taxon>
        <taxon>Saccharomycetales</taxon>
        <taxon>Saccharomycetaceae</taxon>
        <taxon>Eremothecium</taxon>
    </lineage>
</organism>
<name>PXR1_EREGS</name>
<sequence>MGLAATKTKQRFGLDPRNTTWSNDKSRFGHKYLEKLGWEPGKGLGHASHAMSTHIKVTIKDDTMGLGAKLKKKEKKDEFDSGECAGLDVFQRILGRLNGKEEVIADELEKQRKENIINGKWGIHFVKGEVLSSTWDADTMQLKSYSYDKKEITADDAEDAKVSGKHRDRKSRAKREKSNNAALKEKCRDIDRTRKSKRKEKEQEKEKNREKKHNGKEHKEKEHKEKKDKKDKKEKKEKKEKKEKKEKKHKEKSNKRLRSSDSIDDPEATKPSKKSKTKAADSDNVTRDSMLQPRASAASPPPTISTRLSVRSKWIRQKRAAVMDPKALNEIFMVT</sequence>
<reference key="1">
    <citation type="journal article" date="2004" name="Science">
        <title>The Ashbya gossypii genome as a tool for mapping the ancient Saccharomyces cerevisiae genome.</title>
        <authorList>
            <person name="Dietrich F.S."/>
            <person name="Voegeli S."/>
            <person name="Brachat S."/>
            <person name="Lerch A."/>
            <person name="Gates K."/>
            <person name="Steiner S."/>
            <person name="Mohr C."/>
            <person name="Poehlmann R."/>
            <person name="Luedi P."/>
            <person name="Choi S."/>
            <person name="Wing R.A."/>
            <person name="Flavier A."/>
            <person name="Gaffney T.D."/>
            <person name="Philippsen P."/>
        </authorList>
    </citation>
    <scope>NUCLEOTIDE SEQUENCE [LARGE SCALE GENOMIC DNA]</scope>
    <source>
        <strain>ATCC 10895 / CBS 109.51 / FGSC 9923 / NRRL Y-1056</strain>
    </source>
</reference>
<reference key="2">
    <citation type="journal article" date="2013" name="G3 (Bethesda)">
        <title>Genomes of Ashbya fungi isolated from insects reveal four mating-type loci, numerous translocations, lack of transposons, and distinct gene duplications.</title>
        <authorList>
            <person name="Dietrich F.S."/>
            <person name="Voegeli S."/>
            <person name="Kuo S."/>
            <person name="Philippsen P."/>
        </authorList>
    </citation>
    <scope>GENOME REANNOTATION</scope>
    <source>
        <strain>ATCC 10895 / CBS 109.51 / FGSC 9923 / NRRL Y-1056</strain>
    </source>
</reference>
<feature type="initiator methionine" description="Removed" evidence="4">
    <location>
        <position position="1"/>
    </location>
</feature>
<feature type="chain" id="PRO_0000324877" description="Protein PXR1">
    <location>
        <begin position="2"/>
        <end position="335"/>
    </location>
</feature>
<feature type="domain" description="G-patch" evidence="2">
    <location>
        <begin position="25"/>
        <end position="71"/>
    </location>
</feature>
<feature type="region of interest" description="Disordered" evidence="3">
    <location>
        <begin position="155"/>
        <end position="310"/>
    </location>
</feature>
<feature type="compositionally biased region" description="Basic residues" evidence="3">
    <location>
        <begin position="163"/>
        <end position="175"/>
    </location>
</feature>
<feature type="compositionally biased region" description="Basic and acidic residues" evidence="3">
    <location>
        <begin position="183"/>
        <end position="209"/>
    </location>
</feature>
<feature type="compositionally biased region" description="Basic residues" evidence="3">
    <location>
        <begin position="226"/>
        <end position="257"/>
    </location>
</feature>
<comment type="function">
    <text evidence="1">Involved in rRNA-processing at A0, A1 and A2 sites and negatively regulates telomerase.</text>
</comment>
<comment type="subcellular location">
    <subcellularLocation>
        <location evidence="1">Nucleus</location>
        <location evidence="1">Nucleolus</location>
    </subcellularLocation>
</comment>
<comment type="similarity">
    <text evidence="4">Belongs to the PINX1 family.</text>
</comment>
<protein>
    <recommendedName>
        <fullName>Protein PXR1</fullName>
    </recommendedName>
    <alternativeName>
        <fullName>PinX1-related protein 1</fullName>
    </alternativeName>
</protein>
<evidence type="ECO:0000250" key="1"/>
<evidence type="ECO:0000255" key="2">
    <source>
        <dbReference type="PROSITE-ProRule" id="PRU00092"/>
    </source>
</evidence>
<evidence type="ECO:0000256" key="3">
    <source>
        <dbReference type="SAM" id="MobiDB-lite"/>
    </source>
</evidence>
<evidence type="ECO:0000305" key="4"/>